<keyword id="KW-0021">Allosteric enzyme</keyword>
<keyword id="KW-0328">Glycosyltransferase</keyword>
<keyword id="KW-0342">GTP-binding</keyword>
<keyword id="KW-0460">Magnesium</keyword>
<keyword id="KW-0547">Nucleotide-binding</keyword>
<keyword id="KW-1185">Reference proteome</keyword>
<keyword id="KW-0808">Transferase</keyword>
<gene>
    <name evidence="1" type="primary">upp</name>
    <name type="ordered locus">Desal_1577</name>
</gene>
<dbReference type="EC" id="2.4.2.9" evidence="1"/>
<dbReference type="EMBL" id="CP001649">
    <property type="protein sequence ID" value="ACS79639.1"/>
    <property type="molecule type" value="Genomic_DNA"/>
</dbReference>
<dbReference type="RefSeq" id="WP_015851457.1">
    <property type="nucleotide sequence ID" value="NC_012881.1"/>
</dbReference>
<dbReference type="SMR" id="C6BSG3"/>
<dbReference type="STRING" id="526222.Desal_1577"/>
<dbReference type="KEGG" id="dsa:Desal_1577"/>
<dbReference type="eggNOG" id="COG0035">
    <property type="taxonomic scope" value="Bacteria"/>
</dbReference>
<dbReference type="HOGENOM" id="CLU_067096_2_2_7"/>
<dbReference type="OrthoDB" id="9781675at2"/>
<dbReference type="UniPathway" id="UPA00574">
    <property type="reaction ID" value="UER00636"/>
</dbReference>
<dbReference type="Proteomes" id="UP000002601">
    <property type="component" value="Chromosome"/>
</dbReference>
<dbReference type="GO" id="GO:0005525">
    <property type="term" value="F:GTP binding"/>
    <property type="evidence" value="ECO:0007669"/>
    <property type="project" value="UniProtKB-KW"/>
</dbReference>
<dbReference type="GO" id="GO:0000287">
    <property type="term" value="F:magnesium ion binding"/>
    <property type="evidence" value="ECO:0007669"/>
    <property type="project" value="UniProtKB-UniRule"/>
</dbReference>
<dbReference type="GO" id="GO:0004845">
    <property type="term" value="F:uracil phosphoribosyltransferase activity"/>
    <property type="evidence" value="ECO:0007669"/>
    <property type="project" value="UniProtKB-UniRule"/>
</dbReference>
<dbReference type="GO" id="GO:0044206">
    <property type="term" value="P:UMP salvage"/>
    <property type="evidence" value="ECO:0007669"/>
    <property type="project" value="UniProtKB-UniRule"/>
</dbReference>
<dbReference type="GO" id="GO:0006223">
    <property type="term" value="P:uracil salvage"/>
    <property type="evidence" value="ECO:0007669"/>
    <property type="project" value="InterPro"/>
</dbReference>
<dbReference type="CDD" id="cd06223">
    <property type="entry name" value="PRTases_typeI"/>
    <property type="match status" value="1"/>
</dbReference>
<dbReference type="FunFam" id="3.40.50.2020:FF:000003">
    <property type="entry name" value="Uracil phosphoribosyltransferase"/>
    <property type="match status" value="1"/>
</dbReference>
<dbReference type="Gene3D" id="3.40.50.2020">
    <property type="match status" value="1"/>
</dbReference>
<dbReference type="HAMAP" id="MF_01218_B">
    <property type="entry name" value="Upp_B"/>
    <property type="match status" value="1"/>
</dbReference>
<dbReference type="InterPro" id="IPR000836">
    <property type="entry name" value="PRibTrfase_dom"/>
</dbReference>
<dbReference type="InterPro" id="IPR029057">
    <property type="entry name" value="PRTase-like"/>
</dbReference>
<dbReference type="InterPro" id="IPR034332">
    <property type="entry name" value="Upp_B"/>
</dbReference>
<dbReference type="InterPro" id="IPR050054">
    <property type="entry name" value="UPRTase/APRTase"/>
</dbReference>
<dbReference type="InterPro" id="IPR005765">
    <property type="entry name" value="Ura_phspho_trans"/>
</dbReference>
<dbReference type="NCBIfam" id="NF001097">
    <property type="entry name" value="PRK00129.1"/>
    <property type="match status" value="1"/>
</dbReference>
<dbReference type="NCBIfam" id="TIGR01091">
    <property type="entry name" value="upp"/>
    <property type="match status" value="1"/>
</dbReference>
<dbReference type="PANTHER" id="PTHR32315">
    <property type="entry name" value="ADENINE PHOSPHORIBOSYLTRANSFERASE"/>
    <property type="match status" value="1"/>
</dbReference>
<dbReference type="PANTHER" id="PTHR32315:SF4">
    <property type="entry name" value="URACIL PHOSPHORIBOSYLTRANSFERASE, CHLOROPLASTIC"/>
    <property type="match status" value="1"/>
</dbReference>
<dbReference type="Pfam" id="PF14681">
    <property type="entry name" value="UPRTase"/>
    <property type="match status" value="1"/>
</dbReference>
<dbReference type="SUPFAM" id="SSF53271">
    <property type="entry name" value="PRTase-like"/>
    <property type="match status" value="1"/>
</dbReference>
<reference key="1">
    <citation type="submission" date="2009-06" db="EMBL/GenBank/DDBJ databases">
        <title>Complete sequence of Desulfovibrio salexigens DSM 2638.</title>
        <authorList>
            <consortium name="US DOE Joint Genome Institute"/>
            <person name="Lucas S."/>
            <person name="Copeland A."/>
            <person name="Lapidus A."/>
            <person name="Glavina del Rio T."/>
            <person name="Tice H."/>
            <person name="Bruce D."/>
            <person name="Goodwin L."/>
            <person name="Pitluck S."/>
            <person name="Munk A.C."/>
            <person name="Brettin T."/>
            <person name="Detter J.C."/>
            <person name="Han C."/>
            <person name="Tapia R."/>
            <person name="Larimer F."/>
            <person name="Land M."/>
            <person name="Hauser L."/>
            <person name="Kyrpides N."/>
            <person name="Anderson I."/>
            <person name="Wall J.D."/>
            <person name="Arkin A.P."/>
            <person name="Dehal P."/>
            <person name="Chivian D."/>
            <person name="Giles B."/>
            <person name="Hazen T.C."/>
        </authorList>
    </citation>
    <scope>NUCLEOTIDE SEQUENCE [LARGE SCALE GENOMIC DNA]</scope>
    <source>
        <strain>ATCC 14822 / DSM 2638 / NCIMB 8403 / VKM B-1763</strain>
    </source>
</reference>
<accession>C6BSG3</accession>
<comment type="function">
    <text evidence="1">Catalyzes the conversion of uracil and 5-phospho-alpha-D-ribose 1-diphosphate (PRPP) to UMP and diphosphate.</text>
</comment>
<comment type="catalytic activity">
    <reaction evidence="1">
        <text>UMP + diphosphate = 5-phospho-alpha-D-ribose 1-diphosphate + uracil</text>
        <dbReference type="Rhea" id="RHEA:13017"/>
        <dbReference type="ChEBI" id="CHEBI:17568"/>
        <dbReference type="ChEBI" id="CHEBI:33019"/>
        <dbReference type="ChEBI" id="CHEBI:57865"/>
        <dbReference type="ChEBI" id="CHEBI:58017"/>
        <dbReference type="EC" id="2.4.2.9"/>
    </reaction>
</comment>
<comment type="cofactor">
    <cofactor evidence="1">
        <name>Mg(2+)</name>
        <dbReference type="ChEBI" id="CHEBI:18420"/>
    </cofactor>
    <text evidence="1">Binds 1 Mg(2+) ion per subunit. The magnesium is bound as Mg-PRPP.</text>
</comment>
<comment type="activity regulation">
    <text evidence="1">Allosterically activated by GTP.</text>
</comment>
<comment type="pathway">
    <text evidence="1">Pyrimidine metabolism; UMP biosynthesis via salvage pathway; UMP from uracil: step 1/1.</text>
</comment>
<comment type="similarity">
    <text evidence="1">Belongs to the UPRTase family.</text>
</comment>
<protein>
    <recommendedName>
        <fullName evidence="1">Uracil phosphoribosyltransferase</fullName>
        <ecNumber evidence="1">2.4.2.9</ecNumber>
    </recommendedName>
    <alternativeName>
        <fullName evidence="1">UMP pyrophosphorylase</fullName>
    </alternativeName>
    <alternativeName>
        <fullName evidence="1">UPRTase</fullName>
    </alternativeName>
</protein>
<name>UPP_MARSD</name>
<sequence>MAVHVVDHPLVRHKLGILREDGISTSRFRALAQEISRLLTYEATKDLATEAKTITGWAGEVEVEEIKGKKITVVPILRAGLGMMDGVLDMVPGARVSVVGFYRDEETLQPVEYYVKLASNIDERIALILDPMLATGGTLMATIDLLKKSGCTNIKGLFLVAAPEGIEKIVKAHPDVDIYTASIDEKLNDAGYILPGLGDAGDKIFGTK</sequence>
<organism>
    <name type="scientific">Maridesulfovibrio salexigens (strain ATCC 14822 / DSM 2638 / NCIMB 8403 / VKM B-1763)</name>
    <name type="common">Desulfovibrio salexigens</name>
    <dbReference type="NCBI Taxonomy" id="526222"/>
    <lineage>
        <taxon>Bacteria</taxon>
        <taxon>Pseudomonadati</taxon>
        <taxon>Thermodesulfobacteriota</taxon>
        <taxon>Desulfovibrionia</taxon>
        <taxon>Desulfovibrionales</taxon>
        <taxon>Desulfovibrionaceae</taxon>
        <taxon>Maridesulfovibrio</taxon>
    </lineage>
</organism>
<evidence type="ECO:0000255" key="1">
    <source>
        <dbReference type="HAMAP-Rule" id="MF_01218"/>
    </source>
</evidence>
<feature type="chain" id="PRO_1000213926" description="Uracil phosphoribosyltransferase">
    <location>
        <begin position="1"/>
        <end position="208"/>
    </location>
</feature>
<feature type="binding site" evidence="1">
    <location>
        <position position="78"/>
    </location>
    <ligand>
        <name>5-phospho-alpha-D-ribose 1-diphosphate</name>
        <dbReference type="ChEBI" id="CHEBI:58017"/>
    </ligand>
</feature>
<feature type="binding site" evidence="1">
    <location>
        <position position="103"/>
    </location>
    <ligand>
        <name>5-phospho-alpha-D-ribose 1-diphosphate</name>
        <dbReference type="ChEBI" id="CHEBI:58017"/>
    </ligand>
</feature>
<feature type="binding site" evidence="1">
    <location>
        <begin position="130"/>
        <end position="138"/>
    </location>
    <ligand>
        <name>5-phospho-alpha-D-ribose 1-diphosphate</name>
        <dbReference type="ChEBI" id="CHEBI:58017"/>
    </ligand>
</feature>
<feature type="binding site" evidence="1">
    <location>
        <position position="193"/>
    </location>
    <ligand>
        <name>uracil</name>
        <dbReference type="ChEBI" id="CHEBI:17568"/>
    </ligand>
</feature>
<feature type="binding site" evidence="1">
    <location>
        <begin position="198"/>
        <end position="200"/>
    </location>
    <ligand>
        <name>uracil</name>
        <dbReference type="ChEBI" id="CHEBI:17568"/>
    </ligand>
</feature>
<feature type="binding site" evidence="1">
    <location>
        <position position="199"/>
    </location>
    <ligand>
        <name>5-phospho-alpha-D-ribose 1-diphosphate</name>
        <dbReference type="ChEBI" id="CHEBI:58017"/>
    </ligand>
</feature>
<proteinExistence type="inferred from homology"/>